<organism>
    <name type="scientific">Arabidopsis thaliana</name>
    <name type="common">Mouse-ear cress</name>
    <dbReference type="NCBI Taxonomy" id="3702"/>
    <lineage>
        <taxon>Eukaryota</taxon>
        <taxon>Viridiplantae</taxon>
        <taxon>Streptophyta</taxon>
        <taxon>Embryophyta</taxon>
        <taxon>Tracheophyta</taxon>
        <taxon>Spermatophyta</taxon>
        <taxon>Magnoliopsida</taxon>
        <taxon>eudicotyledons</taxon>
        <taxon>Gunneridae</taxon>
        <taxon>Pentapetalae</taxon>
        <taxon>rosids</taxon>
        <taxon>malvids</taxon>
        <taxon>Brassicales</taxon>
        <taxon>Brassicaceae</taxon>
        <taxon>Camelineae</taxon>
        <taxon>Arabidopsis</taxon>
    </lineage>
</organism>
<protein>
    <recommendedName>
        <fullName>Actin-related protein 2/3 complex subunit 1A</fullName>
    </recommendedName>
    <alternativeName>
        <fullName>Actin-related protein C1</fullName>
    </alternativeName>
    <alternativeName>
        <fullName>Actin-related protein C1A</fullName>
    </alternativeName>
    <alternativeName>
        <fullName>Arp2/3 complex 41 kDa subunit</fullName>
    </alternativeName>
    <alternativeName>
        <fullName>p41-ARC</fullName>
    </alternativeName>
</protein>
<feature type="chain" id="PRO_0000422526" description="Actin-related protein 2/3 complex subunit 1A">
    <location>
        <begin position="1"/>
        <end position="378"/>
    </location>
</feature>
<feature type="repeat" description="WD 1">
    <location>
        <begin position="8"/>
        <end position="47"/>
    </location>
</feature>
<feature type="repeat" description="WD 2">
    <location>
        <begin position="53"/>
        <end position="92"/>
    </location>
</feature>
<feature type="repeat" description="WD 3">
    <location>
        <begin position="97"/>
        <end position="138"/>
    </location>
</feature>
<feature type="repeat" description="WD 4">
    <location>
        <begin position="143"/>
        <end position="182"/>
    </location>
</feature>
<feature type="repeat" description="WD 5">
    <location>
        <begin position="203"/>
        <end position="242"/>
    </location>
</feature>
<feature type="repeat" description="WD 6">
    <location>
        <begin position="257"/>
        <end position="295"/>
    </location>
</feature>
<feature type="repeat" description="WD 7">
    <location>
        <begin position="331"/>
        <end position="375"/>
    </location>
</feature>
<dbReference type="EMBL" id="AC004669">
    <property type="protein sequence ID" value="AAC20725.1"/>
    <property type="molecule type" value="Genomic_DNA"/>
</dbReference>
<dbReference type="EMBL" id="CP002685">
    <property type="protein sequence ID" value="AEC08455.1"/>
    <property type="molecule type" value="Genomic_DNA"/>
</dbReference>
<dbReference type="EMBL" id="CP002685">
    <property type="protein sequence ID" value="AEC08457.1"/>
    <property type="molecule type" value="Genomic_DNA"/>
</dbReference>
<dbReference type="EMBL" id="BT004616">
    <property type="protein sequence ID" value="AAO42862.1"/>
    <property type="molecule type" value="mRNA"/>
</dbReference>
<dbReference type="EMBL" id="AK227543">
    <property type="protein sequence ID" value="BAE99541.1"/>
    <property type="molecule type" value="mRNA"/>
</dbReference>
<dbReference type="PIR" id="B84714">
    <property type="entry name" value="B84714"/>
</dbReference>
<dbReference type="RefSeq" id="NP_001189645.1">
    <molecule id="O80856-1"/>
    <property type="nucleotide sequence ID" value="NM_001202716.1"/>
</dbReference>
<dbReference type="RefSeq" id="NP_180648.1">
    <molecule id="O80856-1"/>
    <property type="nucleotide sequence ID" value="NM_128643.4"/>
</dbReference>
<dbReference type="SMR" id="O80856"/>
<dbReference type="BioGRID" id="2990">
    <property type="interactions" value="1"/>
</dbReference>
<dbReference type="FunCoup" id="O80856">
    <property type="interactions" value="4140"/>
</dbReference>
<dbReference type="STRING" id="3702.O80856"/>
<dbReference type="iPTMnet" id="O80856"/>
<dbReference type="PaxDb" id="3702-AT2G30910.3"/>
<dbReference type="ProteomicsDB" id="245182">
    <molecule id="O80856-1"/>
</dbReference>
<dbReference type="EnsemblPlants" id="AT2G30910.1">
    <molecule id="O80856-1"/>
    <property type="protein sequence ID" value="AT2G30910.1"/>
    <property type="gene ID" value="AT2G30910"/>
</dbReference>
<dbReference type="EnsemblPlants" id="AT2G30910.3">
    <molecule id="O80856-1"/>
    <property type="protein sequence ID" value="AT2G30910.3"/>
    <property type="gene ID" value="AT2G30910"/>
</dbReference>
<dbReference type="GeneID" id="817641"/>
<dbReference type="Gramene" id="AT2G30910.1">
    <molecule id="O80856-1"/>
    <property type="protein sequence ID" value="AT2G30910.1"/>
    <property type="gene ID" value="AT2G30910"/>
</dbReference>
<dbReference type="Gramene" id="AT2G30910.3">
    <molecule id="O80856-1"/>
    <property type="protein sequence ID" value="AT2G30910.3"/>
    <property type="gene ID" value="AT2G30910"/>
</dbReference>
<dbReference type="KEGG" id="ath:AT2G30910"/>
<dbReference type="Araport" id="AT2G30910"/>
<dbReference type="TAIR" id="AT2G30910">
    <property type="gene designation" value="ARPC1A"/>
</dbReference>
<dbReference type="eggNOG" id="KOG1523">
    <property type="taxonomic scope" value="Eukaryota"/>
</dbReference>
<dbReference type="HOGENOM" id="CLU_034396_0_0_1"/>
<dbReference type="InParanoid" id="O80856"/>
<dbReference type="OMA" id="YVWEPSP"/>
<dbReference type="PhylomeDB" id="O80856"/>
<dbReference type="PRO" id="PR:O80856"/>
<dbReference type="Proteomes" id="UP000006548">
    <property type="component" value="Chromosome 2"/>
</dbReference>
<dbReference type="ExpressionAtlas" id="O80856">
    <property type="expression patterns" value="baseline and differential"/>
</dbReference>
<dbReference type="GO" id="GO:0005885">
    <property type="term" value="C:Arp2/3 protein complex"/>
    <property type="evidence" value="ECO:0000304"/>
    <property type="project" value="TAIR"/>
</dbReference>
<dbReference type="GO" id="GO:0005737">
    <property type="term" value="C:cytoplasm"/>
    <property type="evidence" value="ECO:0007005"/>
    <property type="project" value="TAIR"/>
</dbReference>
<dbReference type="GO" id="GO:0005634">
    <property type="term" value="C:nucleus"/>
    <property type="evidence" value="ECO:0007005"/>
    <property type="project" value="TAIR"/>
</dbReference>
<dbReference type="GO" id="GO:0003779">
    <property type="term" value="F:actin binding"/>
    <property type="evidence" value="ECO:0007669"/>
    <property type="project" value="UniProtKB-KW"/>
</dbReference>
<dbReference type="GO" id="GO:0007015">
    <property type="term" value="P:actin filament organization"/>
    <property type="evidence" value="ECO:0000304"/>
    <property type="project" value="TAIR"/>
</dbReference>
<dbReference type="GO" id="GO:0034314">
    <property type="term" value="P:Arp2/3 complex-mediated actin nucleation"/>
    <property type="evidence" value="ECO:0007669"/>
    <property type="project" value="InterPro"/>
</dbReference>
<dbReference type="FunFam" id="2.130.10.10:FF:000331">
    <property type="entry name" value="Actin-related protein 2/3 complex subunit"/>
    <property type="match status" value="1"/>
</dbReference>
<dbReference type="Gene3D" id="2.130.10.10">
    <property type="entry name" value="YVTN repeat-like/Quinoprotein amine dehydrogenase"/>
    <property type="match status" value="1"/>
</dbReference>
<dbReference type="InterPro" id="IPR017383">
    <property type="entry name" value="ARPC1"/>
</dbReference>
<dbReference type="InterPro" id="IPR015943">
    <property type="entry name" value="WD40/YVTN_repeat-like_dom_sf"/>
</dbReference>
<dbReference type="InterPro" id="IPR036322">
    <property type="entry name" value="WD40_repeat_dom_sf"/>
</dbReference>
<dbReference type="InterPro" id="IPR001680">
    <property type="entry name" value="WD40_rpt"/>
</dbReference>
<dbReference type="PANTHER" id="PTHR10709">
    <property type="entry name" value="ACTIN-RELATED PROTEIN 2/3 COMPLEX SUBUNIT 1"/>
    <property type="match status" value="1"/>
</dbReference>
<dbReference type="PANTHER" id="PTHR10709:SF2">
    <property type="entry name" value="ACTIN-RELATED PROTEIN 2_3 COMPLEX SUBUNIT"/>
    <property type="match status" value="1"/>
</dbReference>
<dbReference type="Pfam" id="PF00400">
    <property type="entry name" value="WD40"/>
    <property type="match status" value="2"/>
</dbReference>
<dbReference type="PIRSF" id="PIRSF038093">
    <property type="entry name" value="ARP2/3_su1"/>
    <property type="match status" value="1"/>
</dbReference>
<dbReference type="SMART" id="SM00320">
    <property type="entry name" value="WD40"/>
    <property type="match status" value="5"/>
</dbReference>
<dbReference type="SUPFAM" id="SSF50978">
    <property type="entry name" value="WD40 repeat-like"/>
    <property type="match status" value="1"/>
</dbReference>
<dbReference type="PROSITE" id="PS50082">
    <property type="entry name" value="WD_REPEATS_2"/>
    <property type="match status" value="2"/>
</dbReference>
<dbReference type="PROSITE" id="PS50294">
    <property type="entry name" value="WD_REPEATS_REGION"/>
    <property type="match status" value="1"/>
</dbReference>
<evidence type="ECO:0000250" key="1"/>
<evidence type="ECO:0000269" key="2">
    <source>
    </source>
</evidence>
<evidence type="ECO:0000305" key="3"/>
<sequence>MAVVDVHRFAESITCHAWSPDLSMVALCPNNTEVHIYKSLSQDHWERLHVLQKHDQIVSGIDWSSKSNKIVTVSHDRNSYVWSLEGAEWVPTLVILRLNRAALCVQWSPKENKFAVGSGAKTVCICYYEQENNWWVSKLIRKRHESSVTSVAWHPNNVLLATTSTDGKCRVFSTFIKGVDTKDSKAGSPAETKFGEQILQLDLSYSWAFGVKWSPSGNTLAYVGHSSMIYFVDDVGPSPLAQSVAFRDLPLRDVLFISEKMVIGVGYDSNPMVFASDDTGIWSFIRYIGEKKAASSNSSYSSQFSEAFGKFYGSQSKSTTANDASESRGGVHDNCINSIVSLSKAGSPKVMRFSTSGLDGKVAIWDLENMEQELGNQF</sequence>
<proteinExistence type="evidence at transcript level"/>
<gene>
    <name type="primary">ARPC1A</name>
    <name type="ordered locus">At2g30910</name>
    <name type="ORF">F7F1.12</name>
</gene>
<accession>O80856</accession>
<reference key="1">
    <citation type="journal article" date="1999" name="Nature">
        <title>Sequence and analysis of chromosome 2 of the plant Arabidopsis thaliana.</title>
        <authorList>
            <person name="Lin X."/>
            <person name="Kaul S."/>
            <person name="Rounsley S.D."/>
            <person name="Shea T.P."/>
            <person name="Benito M.-I."/>
            <person name="Town C.D."/>
            <person name="Fujii C.Y."/>
            <person name="Mason T.M."/>
            <person name="Bowman C.L."/>
            <person name="Barnstead M.E."/>
            <person name="Feldblyum T.V."/>
            <person name="Buell C.R."/>
            <person name="Ketchum K.A."/>
            <person name="Lee J.J."/>
            <person name="Ronning C.M."/>
            <person name="Koo H.L."/>
            <person name="Moffat K.S."/>
            <person name="Cronin L.A."/>
            <person name="Shen M."/>
            <person name="Pai G."/>
            <person name="Van Aken S."/>
            <person name="Umayam L."/>
            <person name="Tallon L.J."/>
            <person name="Gill J.E."/>
            <person name="Adams M.D."/>
            <person name="Carrera A.J."/>
            <person name="Creasy T.H."/>
            <person name="Goodman H.M."/>
            <person name="Somerville C.R."/>
            <person name="Copenhaver G.P."/>
            <person name="Preuss D."/>
            <person name="Nierman W.C."/>
            <person name="White O."/>
            <person name="Eisen J.A."/>
            <person name="Salzberg S.L."/>
            <person name="Fraser C.M."/>
            <person name="Venter J.C."/>
        </authorList>
    </citation>
    <scope>NUCLEOTIDE SEQUENCE [LARGE SCALE GENOMIC DNA]</scope>
    <source>
        <strain>cv. Columbia</strain>
    </source>
</reference>
<reference key="2">
    <citation type="journal article" date="2017" name="Plant J.">
        <title>Araport11: a complete reannotation of the Arabidopsis thaliana reference genome.</title>
        <authorList>
            <person name="Cheng C.Y."/>
            <person name="Krishnakumar V."/>
            <person name="Chan A.P."/>
            <person name="Thibaud-Nissen F."/>
            <person name="Schobel S."/>
            <person name="Town C.D."/>
        </authorList>
    </citation>
    <scope>GENOME REANNOTATION</scope>
    <source>
        <strain>cv. Columbia</strain>
    </source>
</reference>
<reference key="3">
    <citation type="journal article" date="2003" name="Science">
        <title>Empirical analysis of transcriptional activity in the Arabidopsis genome.</title>
        <authorList>
            <person name="Yamada K."/>
            <person name="Lim J."/>
            <person name="Dale J.M."/>
            <person name="Chen H."/>
            <person name="Shinn P."/>
            <person name="Palm C.J."/>
            <person name="Southwick A.M."/>
            <person name="Wu H.C."/>
            <person name="Kim C.J."/>
            <person name="Nguyen M."/>
            <person name="Pham P.K."/>
            <person name="Cheuk R.F."/>
            <person name="Karlin-Newmann G."/>
            <person name="Liu S.X."/>
            <person name="Lam B."/>
            <person name="Sakano H."/>
            <person name="Wu T."/>
            <person name="Yu G."/>
            <person name="Miranda M."/>
            <person name="Quach H.L."/>
            <person name="Tripp M."/>
            <person name="Chang C.H."/>
            <person name="Lee J.M."/>
            <person name="Toriumi M.J."/>
            <person name="Chan M.M."/>
            <person name="Tang C.C."/>
            <person name="Onodera C.S."/>
            <person name="Deng J.M."/>
            <person name="Akiyama K."/>
            <person name="Ansari Y."/>
            <person name="Arakawa T."/>
            <person name="Banh J."/>
            <person name="Banno F."/>
            <person name="Bowser L."/>
            <person name="Brooks S.Y."/>
            <person name="Carninci P."/>
            <person name="Chao Q."/>
            <person name="Choy N."/>
            <person name="Enju A."/>
            <person name="Goldsmith A.D."/>
            <person name="Gurjal M."/>
            <person name="Hansen N.F."/>
            <person name="Hayashizaki Y."/>
            <person name="Johnson-Hopson C."/>
            <person name="Hsuan V.W."/>
            <person name="Iida K."/>
            <person name="Karnes M."/>
            <person name="Khan S."/>
            <person name="Koesema E."/>
            <person name="Ishida J."/>
            <person name="Jiang P.X."/>
            <person name="Jones T."/>
            <person name="Kawai J."/>
            <person name="Kamiya A."/>
            <person name="Meyers C."/>
            <person name="Nakajima M."/>
            <person name="Narusaka M."/>
            <person name="Seki M."/>
            <person name="Sakurai T."/>
            <person name="Satou M."/>
            <person name="Tamse R."/>
            <person name="Vaysberg M."/>
            <person name="Wallender E.K."/>
            <person name="Wong C."/>
            <person name="Yamamura Y."/>
            <person name="Yuan S."/>
            <person name="Shinozaki K."/>
            <person name="Davis R.W."/>
            <person name="Theologis A."/>
            <person name="Ecker J.R."/>
        </authorList>
    </citation>
    <scope>NUCLEOTIDE SEQUENCE [LARGE SCALE MRNA]</scope>
    <source>
        <strain>cv. Columbia</strain>
    </source>
</reference>
<reference key="4">
    <citation type="submission" date="2006-07" db="EMBL/GenBank/DDBJ databases">
        <title>Large-scale analysis of RIKEN Arabidopsis full-length (RAFL) cDNAs.</title>
        <authorList>
            <person name="Totoki Y."/>
            <person name="Seki M."/>
            <person name="Ishida J."/>
            <person name="Nakajima M."/>
            <person name="Enju A."/>
            <person name="Kamiya A."/>
            <person name="Narusaka M."/>
            <person name="Shin-i T."/>
            <person name="Nakagawa M."/>
            <person name="Sakamoto N."/>
            <person name="Oishi K."/>
            <person name="Kohara Y."/>
            <person name="Kobayashi M."/>
            <person name="Toyoda A."/>
            <person name="Sakaki Y."/>
            <person name="Sakurai T."/>
            <person name="Iida K."/>
            <person name="Akiyama K."/>
            <person name="Satou M."/>
            <person name="Toyoda T."/>
            <person name="Konagaya A."/>
            <person name="Carninci P."/>
            <person name="Kawai J."/>
            <person name="Hayashizaki Y."/>
            <person name="Shinozaki K."/>
        </authorList>
    </citation>
    <scope>NUCLEOTIDE SEQUENCE [LARGE SCALE MRNA]</scope>
    <source>
        <strain>cv. Columbia</strain>
    </source>
</reference>
<reference key="5">
    <citation type="journal article" date="2003" name="Plant Physiol.">
        <title>The putative Arabidopsis arp2/3 complex controls leaf cell morphogenesis.</title>
        <authorList>
            <person name="Li S."/>
            <person name="Blanchoin L."/>
            <person name="Yang Z."/>
            <person name="Lord E.M."/>
        </authorList>
    </citation>
    <scope>TISSUE SPECIFICITY</scope>
    <scope>IDENTIFICATION OF THE ARP2/3 COMPLEX</scope>
</reference>
<reference key="6">
    <citation type="journal article" date="2005" name="Curr. Opin. Plant Biol.">
        <title>Breaking the WAVE complex: the point of Arabidopsis trichomes.</title>
        <authorList>
            <person name="Szymanski D.B."/>
        </authorList>
    </citation>
    <scope>REVIEW</scope>
</reference>
<keyword id="KW-0009">Actin-binding</keyword>
<keyword id="KW-0025">Alternative splicing</keyword>
<keyword id="KW-0963">Cytoplasm</keyword>
<keyword id="KW-0206">Cytoskeleton</keyword>
<keyword id="KW-1185">Reference proteome</keyword>
<keyword id="KW-0677">Repeat</keyword>
<keyword id="KW-0853">WD repeat</keyword>
<comment type="function">
    <text evidence="1">Functions as a component of the Arp2/3 complex which is involved in regulation of actin polymerization and together with an activating nucleation-promoting factor (NPF) mediates the formation of branched actin networks. Arp2/3 complex plays a critical role in the control of cell morphogenesis via the modulation of cell polarity development.</text>
</comment>
<comment type="subunit">
    <text>Component of the Arp2/3 complex composed of ARP2, ARP3, ARPC1/p41-ARC, ARPC2/p34-ARC, ARPC3/p21-ARC, ARPC4/p20-ARC and ARPC5/p16-ARC.</text>
</comment>
<comment type="subcellular location">
    <subcellularLocation>
        <location evidence="1">Cytoplasm</location>
        <location evidence="1">Cytoskeleton</location>
    </subcellularLocation>
</comment>
<comment type="alternative products">
    <event type="alternative splicing"/>
    <isoform>
        <id>O80856-1</id>
        <name>1</name>
        <sequence type="displayed"/>
    </isoform>
    <text>A number of isoforms are produced. According to EST sequences.</text>
</comment>
<comment type="tissue specificity">
    <text evidence="2">Expressed at low levels in all tissues with a relatively highest expression in inflorescences.</text>
</comment>
<comment type="similarity">
    <text evidence="3">Belongs to the WD repeat ARPC1 family.</text>
</comment>
<name>ARC1A_ARATH</name>